<protein>
    <recommendedName>
        <fullName>2,4,6-trihydroxybenzophenone synthase</fullName>
        <shortName>GmBPS</shortName>
        <ecNumber>2.3.1.220</ecNumber>
    </recommendedName>
</protein>
<proteinExistence type="evidence at protein level"/>
<dbReference type="EC" id="2.3.1.220"/>
<dbReference type="EMBL" id="JF907623">
    <property type="protein sequence ID" value="AEI27291.1"/>
    <property type="molecule type" value="mRNA"/>
</dbReference>
<dbReference type="PDB" id="7CBF">
    <property type="method" value="X-ray"/>
    <property type="resolution" value="2.30 A"/>
    <property type="chains" value="A/B=1-391"/>
</dbReference>
<dbReference type="PDBsum" id="7CBF"/>
<dbReference type="SMR" id="L7NCQ3"/>
<dbReference type="KEGG" id="ag:AEI27291"/>
<dbReference type="BRENDA" id="2.3.1.151">
    <property type="organism ID" value="13052"/>
</dbReference>
<dbReference type="BRENDA" id="2.3.1.220">
    <property type="organism ID" value="13052"/>
</dbReference>
<dbReference type="GO" id="GO:0016746">
    <property type="term" value="F:acyltransferase activity"/>
    <property type="evidence" value="ECO:0000314"/>
    <property type="project" value="UniProtKB"/>
</dbReference>
<dbReference type="GO" id="GO:0047181">
    <property type="term" value="F:tetrahydroxybenzophenone synthase activity"/>
    <property type="evidence" value="ECO:0000314"/>
    <property type="project" value="UniProtKB"/>
</dbReference>
<dbReference type="GO" id="GO:0102735">
    <property type="term" value="F:trihydroxybenzophenone synthase activity"/>
    <property type="evidence" value="ECO:0007669"/>
    <property type="project" value="UniProtKB-EC"/>
</dbReference>
<dbReference type="GO" id="GO:1901787">
    <property type="term" value="P:benzoyl-CoA metabolic process"/>
    <property type="evidence" value="ECO:0000314"/>
    <property type="project" value="UniProtKB"/>
</dbReference>
<dbReference type="GO" id="GO:2001293">
    <property type="term" value="P:malonyl-CoA metabolic process"/>
    <property type="evidence" value="ECO:0000314"/>
    <property type="project" value="UniProtKB"/>
</dbReference>
<dbReference type="GO" id="GO:0030639">
    <property type="term" value="P:polyketide biosynthetic process"/>
    <property type="evidence" value="ECO:0007669"/>
    <property type="project" value="TreeGrafter"/>
</dbReference>
<dbReference type="CDD" id="cd00831">
    <property type="entry name" value="CHS_like"/>
    <property type="match status" value="1"/>
</dbReference>
<dbReference type="FunFam" id="3.40.47.10:FF:000014">
    <property type="entry name" value="Chalcone synthase 1"/>
    <property type="match status" value="1"/>
</dbReference>
<dbReference type="FunFam" id="3.40.47.10:FF:000025">
    <property type="entry name" value="Chalcone synthase 2"/>
    <property type="match status" value="1"/>
</dbReference>
<dbReference type="Gene3D" id="3.40.47.10">
    <property type="match status" value="2"/>
</dbReference>
<dbReference type="InterPro" id="IPR012328">
    <property type="entry name" value="Chalcone/stilbene_synt_C"/>
</dbReference>
<dbReference type="InterPro" id="IPR001099">
    <property type="entry name" value="Chalcone/stilbene_synt_N"/>
</dbReference>
<dbReference type="InterPro" id="IPR011141">
    <property type="entry name" value="Polyketide_synthase_type-III"/>
</dbReference>
<dbReference type="InterPro" id="IPR016039">
    <property type="entry name" value="Thiolase-like"/>
</dbReference>
<dbReference type="PANTHER" id="PTHR11877:SF14">
    <property type="entry name" value="CHALCONE SYNTHASE"/>
    <property type="match status" value="1"/>
</dbReference>
<dbReference type="PANTHER" id="PTHR11877">
    <property type="entry name" value="HYDROXYMETHYLGLUTARYL-COA SYNTHASE"/>
    <property type="match status" value="1"/>
</dbReference>
<dbReference type="Pfam" id="PF02797">
    <property type="entry name" value="Chal_sti_synt_C"/>
    <property type="match status" value="1"/>
</dbReference>
<dbReference type="Pfam" id="PF00195">
    <property type="entry name" value="Chal_sti_synt_N"/>
    <property type="match status" value="1"/>
</dbReference>
<dbReference type="PIRSF" id="PIRSF000451">
    <property type="entry name" value="PKS_III"/>
    <property type="match status" value="1"/>
</dbReference>
<dbReference type="SUPFAM" id="SSF53901">
    <property type="entry name" value="Thiolase-like"/>
    <property type="match status" value="2"/>
</dbReference>
<comment type="function">
    <text>Type III polyketide synthase involved in the biosynthesis of benzophenones and xanthones. Produces mainly 2,4,6-trihydroxybenzophenone together with minor amounts of tetraketide lactone, triketide lactone and diketide lactone. The preferred substrate is benzoyl-CoA, but can also use acetyl-CoA, phenylacetyl-CoA, hexanoyl-CoA, cinnamoyl-CoA, p-coumaroyl-CoA and salicoyl-CoA.</text>
</comment>
<comment type="catalytic activity">
    <reaction evidence="2">
        <text>benzoyl-CoA + 3 malonyl-CoA + 2 H(+) = 2,4,6-trihydroxybenzophenone + 3 CO2 + 4 CoA</text>
        <dbReference type="Rhea" id="RHEA:35143"/>
        <dbReference type="ChEBI" id="CHEBI:15378"/>
        <dbReference type="ChEBI" id="CHEBI:16526"/>
        <dbReference type="ChEBI" id="CHEBI:57287"/>
        <dbReference type="ChEBI" id="CHEBI:57369"/>
        <dbReference type="ChEBI" id="CHEBI:57384"/>
        <dbReference type="ChEBI" id="CHEBI:77765"/>
        <dbReference type="EC" id="2.3.1.220"/>
    </reaction>
</comment>
<comment type="biophysicochemical properties">
    <kinetics>
        <KM evidence="2">9.65 uM for benzoyl-CoA</KM>
        <KM evidence="2">16.38 uM for malonyl-CoA</KM>
        <text>kcat is 2.97 min(-1) with benzoyl-CoA as substrate. kcat is 3.49 min(-1) with malonyl-CoA as substrate.</text>
    </kinetics>
    <phDependence>
        <text evidence="2">Optimum pH is 6.5-7.0.</text>
    </phDependence>
    <temperatureDependence>
        <text evidence="2">Optimum temperature is 30 degrees Celsius.</text>
    </temperatureDependence>
</comment>
<comment type="subunit">
    <text evidence="2">Homodimer.</text>
</comment>
<comment type="tissue specificity">
    <text evidence="2">Expressed in young fruit pericarp.</text>
</comment>
<comment type="similarity">
    <text evidence="3">Belongs to the thiolase-like superfamily. Chalcone/stilbene synthases family.</text>
</comment>
<name>TBSYN_GARMA</name>
<keyword id="KW-0002">3D-structure</keyword>
<keyword id="KW-0012">Acyltransferase</keyword>
<keyword id="KW-0808">Transferase</keyword>
<accession>L7NCQ3</accession>
<organism>
    <name type="scientific">Garcinia mangostana</name>
    <name type="common">Mangosteen</name>
    <dbReference type="NCBI Taxonomy" id="58228"/>
    <lineage>
        <taxon>Eukaryota</taxon>
        <taxon>Viridiplantae</taxon>
        <taxon>Streptophyta</taxon>
        <taxon>Embryophyta</taxon>
        <taxon>Tracheophyta</taxon>
        <taxon>Spermatophyta</taxon>
        <taxon>Magnoliopsida</taxon>
        <taxon>eudicotyledons</taxon>
        <taxon>Gunneridae</taxon>
        <taxon>Pentapetalae</taxon>
        <taxon>rosids</taxon>
        <taxon>fabids</taxon>
        <taxon>Malpighiales</taxon>
        <taxon>Clusiaceae</taxon>
        <taxon>Garcinieae</taxon>
        <taxon>Garcinia</taxon>
    </lineage>
</organism>
<reference key="1">
    <citation type="journal article" date="2012" name="Phytochemistry">
        <title>Benzophenone synthase from Garcinia mangostana L. pericarps.</title>
        <authorList>
            <person name="Nualkaew N."/>
            <person name="Morita H."/>
            <person name="Shimokawa Y."/>
            <person name="Kinjo K."/>
            <person name="Kushiro T."/>
            <person name="De-Eknamkul W."/>
            <person name="Ebizuka Y."/>
            <person name="Abe I."/>
        </authorList>
    </citation>
    <scope>NUCLEOTIDE SEQUENCE [MRNA]</scope>
    <scope>CATALYTIC ACTIVITY</scope>
    <scope>BIOPHYSICOCHEMICAL PROPERTIES</scope>
    <scope>SUBUNIT</scope>
    <scope>TISSUE SPECIFICITY</scope>
    <scope>MUTAGENESIS OF THR-133; ALA-257 AND GLY-339</scope>
    <scope>3D-STRUCTURE MODELING</scope>
</reference>
<evidence type="ECO:0000250" key="1"/>
<evidence type="ECO:0000269" key="2">
    <source>
    </source>
</evidence>
<evidence type="ECO:0000305" key="3"/>
<evidence type="ECO:0007829" key="4">
    <source>
        <dbReference type="PDB" id="7CBF"/>
    </source>
</evidence>
<gene>
    <name type="primary">BPS</name>
</gene>
<sequence length="391" mass="42712">MAPAMDSAQNGHQSRGSANVLAIGTANPPNVILQEDYPDFYFKVTNSEHLTDLKEKFKRICVKSKTRKRHFYLTEQILKENPGIATYGAGSLDSRQKILETEIPKLGKEAAMVAIQEWGQPVSKITHVVFATTSGFMMPGADYSITRLLGLNPNVRRVMIYNQGCFAGGTALRVAKDLAENNKGARVLVVCAENTAMTFHGPNENHLDVLVGQAMFSDGAAALIIGANPNLPEERPVYEMVAAHQTIVPESDGAIVAHFYEMGMSYFLKENVIPLFGNNIEACMEAAFKEYGISDWNSLFYSVHPGGRAIVDGIAEKLGLDEENLKATRHVLSEYGNMGSACVIFILDELRKKSKEEKKLTTGDGKEWGCLIGLGPGLTVETVVLRSVPIA</sequence>
<feature type="chain" id="PRO_0000422264" description="2,4,6-trihydroxybenzophenone synthase">
    <location>
        <begin position="1"/>
        <end position="391"/>
    </location>
</feature>
<feature type="active site" evidence="1">
    <location>
        <position position="165"/>
    </location>
</feature>
<feature type="mutagenesis site" description="Changed substrate specificity." evidence="2">
    <original>T</original>
    <variation>L</variation>
    <location>
        <position position="133"/>
    </location>
</feature>
<feature type="mutagenesis site" description="No effect." evidence="2">
    <original>A</original>
    <variation>G</variation>
    <location>
        <position position="257"/>
    </location>
</feature>
<feature type="mutagenesis site" description="No effect with benzoyl-CoA as substrate, but loss of activity with p-coumaroyl-CoA as substrate." evidence="2">
    <original>G</original>
    <variation>S</variation>
    <location>
        <position position="339"/>
    </location>
</feature>
<feature type="mutagenesis site" description="Loss of activity." evidence="2">
    <original>G</original>
    <variation>V</variation>
    <location>
        <position position="339"/>
    </location>
</feature>
<feature type="strand" evidence="4">
    <location>
        <begin position="19"/>
        <end position="26"/>
    </location>
</feature>
<feature type="strand" evidence="4">
    <location>
        <begin position="29"/>
        <end position="33"/>
    </location>
</feature>
<feature type="helix" evidence="4">
    <location>
        <begin position="34"/>
        <end position="36"/>
    </location>
</feature>
<feature type="helix" evidence="4">
    <location>
        <begin position="37"/>
        <end position="44"/>
    </location>
</feature>
<feature type="helix" evidence="4">
    <location>
        <begin position="51"/>
        <end position="63"/>
    </location>
</feature>
<feature type="strand" evidence="4">
    <location>
        <begin position="68"/>
        <end position="72"/>
    </location>
</feature>
<feature type="helix" evidence="4">
    <location>
        <begin position="75"/>
        <end position="80"/>
    </location>
</feature>
<feature type="helix" evidence="4">
    <location>
        <begin position="82"/>
        <end position="85"/>
    </location>
</feature>
<feature type="helix" evidence="4">
    <location>
        <begin position="92"/>
        <end position="118"/>
    </location>
</feature>
<feature type="helix" evidence="4">
    <location>
        <begin position="122"/>
        <end position="124"/>
    </location>
</feature>
<feature type="strand" evidence="4">
    <location>
        <begin position="127"/>
        <end position="132"/>
    </location>
</feature>
<feature type="strand" evidence="4">
    <location>
        <begin position="137"/>
        <end position="139"/>
    </location>
</feature>
<feature type="helix" evidence="4">
    <location>
        <begin position="141"/>
        <end position="149"/>
    </location>
</feature>
<feature type="strand" evidence="4">
    <location>
        <begin position="156"/>
        <end position="162"/>
    </location>
</feature>
<feature type="helix" evidence="4">
    <location>
        <begin position="164"/>
        <end position="166"/>
    </location>
</feature>
<feature type="helix" evidence="4">
    <location>
        <begin position="167"/>
        <end position="181"/>
    </location>
</feature>
<feature type="strand" evidence="4">
    <location>
        <begin position="187"/>
        <end position="193"/>
    </location>
</feature>
<feature type="turn" evidence="4">
    <location>
        <begin position="195"/>
        <end position="198"/>
    </location>
</feature>
<feature type="helix" evidence="4">
    <location>
        <begin position="208"/>
        <end position="213"/>
    </location>
</feature>
<feature type="strand" evidence="4">
    <location>
        <begin position="219"/>
        <end position="228"/>
    </location>
</feature>
<feature type="turn" evidence="4">
    <location>
        <begin position="231"/>
        <end position="233"/>
    </location>
</feature>
<feature type="strand" evidence="4">
    <location>
        <begin position="237"/>
        <end position="247"/>
    </location>
</feature>
<feature type="strand" evidence="4">
    <location>
        <begin position="254"/>
        <end position="260"/>
    </location>
</feature>
<feature type="strand" evidence="4">
    <location>
        <begin position="263"/>
        <end position="268"/>
    </location>
</feature>
<feature type="helix" evidence="4">
    <location>
        <begin position="272"/>
        <end position="288"/>
    </location>
</feature>
<feature type="helix" evidence="4">
    <location>
        <begin position="289"/>
        <end position="291"/>
    </location>
</feature>
<feature type="helix" evidence="4">
    <location>
        <begin position="296"/>
        <end position="298"/>
    </location>
</feature>
<feature type="strand" evidence="4">
    <location>
        <begin position="299"/>
        <end position="303"/>
    </location>
</feature>
<feature type="helix" evidence="4">
    <location>
        <begin position="308"/>
        <end position="318"/>
    </location>
</feature>
<feature type="helix" evidence="4">
    <location>
        <begin position="322"/>
        <end position="335"/>
    </location>
</feature>
<feature type="helix" evidence="4">
    <location>
        <begin position="339"/>
        <end position="341"/>
    </location>
</feature>
<feature type="helix" evidence="4">
    <location>
        <begin position="342"/>
        <end position="356"/>
    </location>
</feature>
<feature type="strand" evidence="4">
    <location>
        <begin position="366"/>
        <end position="375"/>
    </location>
</feature>
<feature type="turn" evidence="4">
    <location>
        <begin position="376"/>
        <end position="378"/>
    </location>
</feature>
<feature type="strand" evidence="4">
    <location>
        <begin position="379"/>
        <end position="386"/>
    </location>
</feature>